<keyword id="KW-0067">ATP-binding</keyword>
<keyword id="KW-0963">Cytoplasm</keyword>
<keyword id="KW-0418">Kinase</keyword>
<keyword id="KW-0460">Magnesium</keyword>
<keyword id="KW-0479">Metal-binding</keyword>
<keyword id="KW-0547">Nucleotide-binding</keyword>
<keyword id="KW-0808">Transferase</keyword>
<accession>Q9F1X7</accession>
<proteinExistence type="inferred from homology"/>
<sequence>MSKIIAVNAGSSTLKFKLYEMPEENVLAEGVIERIALPASHVEIKYGDGKKYEKTTDVKNHEQAIQILLDQLLDLDIIKEYSEINGVGHRVVAGGEYFDKSVVITPDVLKKIESLTELAPLHEPANVLGIKAFKKVLPDIISVAVFDTAFHATLPEKNFLYSLPYEYYEKYSARKYGFHGIGNRYVSQRAAELLGKPAEDLKMIITHLGAGASICPVKNGKSFDTSMGFTPVTGITMATRSGDVDPSLLAYVMEKEGMTDINEMIKVLNTKSGLLGISGVSADMREVEAAQATNPRAKVAREIYVNRIIRYVGAYLAEMGGADAIVFTAGVGENSITIRKEVAEGLNYFGIGVDNEKNDVRGVVRDISAKDSKIKTLLVPTDEELMIVRDVQTLANK</sequence>
<feature type="chain" id="PRO_0000107573" description="Acetate kinase">
    <location>
        <begin position="1"/>
        <end position="397"/>
    </location>
</feature>
<feature type="active site" description="Proton donor/acceptor" evidence="1">
    <location>
        <position position="147"/>
    </location>
</feature>
<feature type="binding site" evidence="1">
    <location>
        <position position="8"/>
    </location>
    <ligand>
        <name>Mg(2+)</name>
        <dbReference type="ChEBI" id="CHEBI:18420"/>
    </ligand>
</feature>
<feature type="binding site" evidence="1">
    <location>
        <position position="15"/>
    </location>
    <ligand>
        <name>ATP</name>
        <dbReference type="ChEBI" id="CHEBI:30616"/>
    </ligand>
</feature>
<feature type="binding site" evidence="1">
    <location>
        <position position="90"/>
    </location>
    <ligand>
        <name>substrate</name>
    </ligand>
</feature>
<feature type="binding site" evidence="1">
    <location>
        <begin position="207"/>
        <end position="211"/>
    </location>
    <ligand>
        <name>ATP</name>
        <dbReference type="ChEBI" id="CHEBI:30616"/>
    </ligand>
</feature>
<feature type="binding site" evidence="1">
    <location>
        <begin position="283"/>
        <end position="285"/>
    </location>
    <ligand>
        <name>ATP</name>
        <dbReference type="ChEBI" id="CHEBI:30616"/>
    </ligand>
</feature>
<feature type="binding site" evidence="1">
    <location>
        <begin position="330"/>
        <end position="334"/>
    </location>
    <ligand>
        <name>ATP</name>
        <dbReference type="ChEBI" id="CHEBI:30616"/>
    </ligand>
</feature>
<feature type="binding site" evidence="1">
    <location>
        <position position="383"/>
    </location>
    <ligand>
        <name>Mg(2+)</name>
        <dbReference type="ChEBI" id="CHEBI:18420"/>
    </ligand>
</feature>
<feature type="site" description="Transition state stabilizer" evidence="1">
    <location>
        <position position="179"/>
    </location>
</feature>
<feature type="site" description="Transition state stabilizer" evidence="1">
    <location>
        <position position="240"/>
    </location>
</feature>
<evidence type="ECO:0000255" key="1">
    <source>
        <dbReference type="HAMAP-Rule" id="MF_00020"/>
    </source>
</evidence>
<comment type="function">
    <text evidence="1">Catalyzes the formation of acetyl phosphate from acetate and ATP. Can also catalyze the reverse reaction.</text>
</comment>
<comment type="catalytic activity">
    <reaction evidence="1">
        <text>acetate + ATP = acetyl phosphate + ADP</text>
        <dbReference type="Rhea" id="RHEA:11352"/>
        <dbReference type="ChEBI" id="CHEBI:22191"/>
        <dbReference type="ChEBI" id="CHEBI:30089"/>
        <dbReference type="ChEBI" id="CHEBI:30616"/>
        <dbReference type="ChEBI" id="CHEBI:456216"/>
        <dbReference type="EC" id="2.7.2.1"/>
    </reaction>
</comment>
<comment type="cofactor">
    <cofactor evidence="1">
        <name>Mg(2+)</name>
        <dbReference type="ChEBI" id="CHEBI:18420"/>
    </cofactor>
    <cofactor evidence="1">
        <name>Mn(2+)</name>
        <dbReference type="ChEBI" id="CHEBI:29035"/>
    </cofactor>
    <text evidence="1">Mg(2+). Can also accept Mn(2+).</text>
</comment>
<comment type="pathway">
    <text evidence="1">Metabolic intermediate biosynthesis; acetyl-CoA biosynthesis; acetyl-CoA from acetate: step 1/2.</text>
</comment>
<comment type="subunit">
    <text evidence="1">Homodimer.</text>
</comment>
<comment type="subcellular location">
    <subcellularLocation>
        <location evidence="1">Cytoplasm</location>
    </subcellularLocation>
</comment>
<comment type="similarity">
    <text evidence="1">Belongs to the acetokinase family.</text>
</comment>
<gene>
    <name evidence="1" type="primary">ackA</name>
    <name type="synonym">ack</name>
</gene>
<protein>
    <recommendedName>
        <fullName evidence="1">Acetate kinase</fullName>
        <ecNumber evidence="1">2.7.2.1</ecNumber>
    </recommendedName>
    <alternativeName>
        <fullName evidence="1">Acetokinase</fullName>
    </alternativeName>
</protein>
<dbReference type="EC" id="2.7.2.1" evidence="1"/>
<dbReference type="EMBL" id="AB035799">
    <property type="protein sequence ID" value="BAB19266.1"/>
    <property type="molecule type" value="Genomic_DNA"/>
</dbReference>
<dbReference type="SMR" id="Q9F1X7"/>
<dbReference type="BRENDA" id="2.7.2.1">
    <property type="organism ID" value="2896"/>
</dbReference>
<dbReference type="UniPathway" id="UPA00340">
    <property type="reaction ID" value="UER00458"/>
</dbReference>
<dbReference type="GO" id="GO:0005737">
    <property type="term" value="C:cytoplasm"/>
    <property type="evidence" value="ECO:0007669"/>
    <property type="project" value="UniProtKB-SubCell"/>
</dbReference>
<dbReference type="GO" id="GO:0008776">
    <property type="term" value="F:acetate kinase activity"/>
    <property type="evidence" value="ECO:0007669"/>
    <property type="project" value="UniProtKB-UniRule"/>
</dbReference>
<dbReference type="GO" id="GO:0005524">
    <property type="term" value="F:ATP binding"/>
    <property type="evidence" value="ECO:0007669"/>
    <property type="project" value="UniProtKB-KW"/>
</dbReference>
<dbReference type="GO" id="GO:0000287">
    <property type="term" value="F:magnesium ion binding"/>
    <property type="evidence" value="ECO:0007669"/>
    <property type="project" value="UniProtKB-UniRule"/>
</dbReference>
<dbReference type="GO" id="GO:0006083">
    <property type="term" value="P:acetate metabolic process"/>
    <property type="evidence" value="ECO:0007669"/>
    <property type="project" value="TreeGrafter"/>
</dbReference>
<dbReference type="GO" id="GO:0006085">
    <property type="term" value="P:acetyl-CoA biosynthetic process"/>
    <property type="evidence" value="ECO:0007669"/>
    <property type="project" value="UniProtKB-UniRule"/>
</dbReference>
<dbReference type="CDD" id="cd24010">
    <property type="entry name" value="ASKHA_NBD_AcK_PK"/>
    <property type="match status" value="1"/>
</dbReference>
<dbReference type="Gene3D" id="3.30.420.40">
    <property type="match status" value="2"/>
</dbReference>
<dbReference type="HAMAP" id="MF_00020">
    <property type="entry name" value="Acetate_kinase"/>
    <property type="match status" value="1"/>
</dbReference>
<dbReference type="InterPro" id="IPR004372">
    <property type="entry name" value="Ac/propionate_kinase"/>
</dbReference>
<dbReference type="InterPro" id="IPR000890">
    <property type="entry name" value="Aliphatic_acid_kin_short-chain"/>
</dbReference>
<dbReference type="InterPro" id="IPR023865">
    <property type="entry name" value="Aliphatic_acid_kinase_CS"/>
</dbReference>
<dbReference type="InterPro" id="IPR043129">
    <property type="entry name" value="ATPase_NBD"/>
</dbReference>
<dbReference type="NCBIfam" id="TIGR00016">
    <property type="entry name" value="ackA"/>
    <property type="match status" value="1"/>
</dbReference>
<dbReference type="PANTHER" id="PTHR21060">
    <property type="entry name" value="ACETATE KINASE"/>
    <property type="match status" value="1"/>
</dbReference>
<dbReference type="PANTHER" id="PTHR21060:SF15">
    <property type="entry name" value="ACETATE KINASE-RELATED"/>
    <property type="match status" value="1"/>
</dbReference>
<dbReference type="Pfam" id="PF00871">
    <property type="entry name" value="Acetate_kinase"/>
    <property type="match status" value="1"/>
</dbReference>
<dbReference type="PIRSF" id="PIRSF000722">
    <property type="entry name" value="Acetate_prop_kin"/>
    <property type="match status" value="1"/>
</dbReference>
<dbReference type="PRINTS" id="PR00471">
    <property type="entry name" value="ACETATEKNASE"/>
</dbReference>
<dbReference type="SUPFAM" id="SSF53067">
    <property type="entry name" value="Actin-like ATPase domain"/>
    <property type="match status" value="2"/>
</dbReference>
<dbReference type="PROSITE" id="PS01075">
    <property type="entry name" value="ACETATE_KINASE_1"/>
    <property type="match status" value="1"/>
</dbReference>
<reference key="1">
    <citation type="submission" date="1999-12" db="EMBL/GenBank/DDBJ databases">
        <title>Genomic region of the gene coding for acetate kinase from Lactobacillus sanfranciscensis.</title>
        <authorList>
            <person name="Knorr R."/>
            <person name="Ehrmann M.A."/>
            <person name="Vogel R.F."/>
        </authorList>
    </citation>
    <scope>NUCLEOTIDE SEQUENCE [GENOMIC DNA]</scope>
    <source>
        <strain>TMW 1.53</strain>
    </source>
</reference>
<organism>
    <name type="scientific">Fructilactobacillus sanfranciscensis</name>
    <name type="common">Lactobacillus sanfranciscensis</name>
    <dbReference type="NCBI Taxonomy" id="1625"/>
    <lineage>
        <taxon>Bacteria</taxon>
        <taxon>Bacillati</taxon>
        <taxon>Bacillota</taxon>
        <taxon>Bacilli</taxon>
        <taxon>Lactobacillales</taxon>
        <taxon>Lactobacillaceae</taxon>
        <taxon>Fructilactobacillus</taxon>
    </lineage>
</organism>
<name>ACKA_FRUSA</name>